<reference evidence="6" key="1">
    <citation type="submission" date="2011-10" db="EMBL/GenBank/DDBJ databases">
        <title>A systematically improved high quality genome and transcriptome of the human blood fluke Schistosoma mansoni.</title>
        <authorList>
            <person name="Protasio A.V."/>
            <person name="Tsai J.I."/>
            <person name="Babbage A."/>
            <person name="Nichol S."/>
            <person name="Hunt M."/>
            <person name="de Silva N."/>
            <person name="Anderson T.J.C."/>
            <person name="Clark R.C."/>
            <person name="Davidson C."/>
            <person name="Dillon G.P."/>
            <person name="Holroyd N."/>
            <person name="LoVerde P.T."/>
            <person name="Lloyd C."/>
            <person name="McQuillan J."/>
            <person name="Oliveira G."/>
            <person name="Otto T.D."/>
            <person name="Parker-Manuel S.J."/>
            <person name="Quail M.A."/>
            <person name="Wilson A."/>
            <person name="Zerlotini A."/>
            <person name="Dunne D.W."/>
            <person name="Berriman M."/>
        </authorList>
    </citation>
    <scope>NUCLEOTIDE SEQUENCE [LARGE SCALE GENOMIC DNA]</scope>
    <source>
        <strain>Puerto Rican</strain>
    </source>
</reference>
<reference evidence="7" key="2">
    <citation type="journal article" date="2017" name="Acta Trop.">
        <title>Structure and kinetics assays of recombinant Schistosoma mansoni dihydrofolate reductase.</title>
        <authorList>
            <person name="Serrao V.H.B."/>
            <person name="Romanello L."/>
            <person name="Cassago A."/>
            <person name="de Souza J.R.T."/>
            <person name="Cheleski J."/>
            <person name="DeMarco R."/>
            <person name="Brandao-Neto J."/>
            <person name="Pereira H.D."/>
        </authorList>
    </citation>
    <scope>X-RAY CRYSTALLOGRAPHY (1.95 ANGSTROMS) OF 1-181</scope>
    <scope>FUNCTION</scope>
    <scope>CATALYTIC ACTIVITY</scope>
    <scope>BIOPHYSICOCHEMICAL PROPERTIES</scope>
    <scope>PATHWAY</scope>
    <scope>SUBUNIT</scope>
</reference>
<protein>
    <recommendedName>
        <fullName evidence="4">Dihydrofolate reductase</fullName>
        <ecNumber evidence="3">1.5.1.3</ecNumber>
    </recommendedName>
</protein>
<sequence>MRLNVVVAVSENWGIGKGGGLPWKIKKDMEFFKTVTTKAHPGLKNAVVMGRVTWESIPESFKPLKDRINIVVSSTLSHAPSFVQVVPSLNAAIDLLYNEEFSSIVDEVFIIGGYRLYKEALKQSIYPVRIYCTHILSEVDCDTYFPKVDWDKLKKVDLPDIPADTFTENGFTFKFCVYDVPSEQFI</sequence>
<evidence type="ECO:0000250" key="1">
    <source>
        <dbReference type="UniProtKB" id="P00374"/>
    </source>
</evidence>
<evidence type="ECO:0000255" key="2">
    <source>
        <dbReference type="PROSITE-ProRule" id="PRU00660"/>
    </source>
</evidence>
<evidence type="ECO:0000269" key="3">
    <source>
    </source>
</evidence>
<evidence type="ECO:0000303" key="4">
    <source>
    </source>
</evidence>
<evidence type="ECO:0000305" key="5"/>
<evidence type="ECO:0000312" key="6">
    <source>
        <dbReference type="EMBL" id="CCD79537.1"/>
    </source>
</evidence>
<evidence type="ECO:0007744" key="7">
    <source>
        <dbReference type="PDB" id="3VCO"/>
    </source>
</evidence>
<evidence type="ECO:0007829" key="8">
    <source>
        <dbReference type="PDB" id="3VCO"/>
    </source>
</evidence>
<feature type="chain" id="PRO_0000450383" description="Dihydrofolate reductase">
    <location>
        <begin position="1"/>
        <end position="186"/>
    </location>
</feature>
<feature type="domain" description="DHFR" evidence="2">
    <location>
        <begin position="2"/>
        <end position="180"/>
    </location>
</feature>
<feature type="binding site" evidence="1">
    <location>
        <position position="8"/>
    </location>
    <ligand>
        <name>NADP(+)</name>
        <dbReference type="ChEBI" id="CHEBI:58349"/>
    </ligand>
</feature>
<feature type="binding site" evidence="1">
    <location>
        <begin position="14"/>
        <end position="20"/>
    </location>
    <ligand>
        <name>NADP(+)</name>
        <dbReference type="ChEBI" id="CHEBI:58349"/>
    </ligand>
</feature>
<feature type="binding site" evidence="1">
    <location>
        <begin position="28"/>
        <end position="33"/>
    </location>
    <ligand>
        <name>substrate</name>
    </ligand>
</feature>
<feature type="binding site" evidence="1">
    <location>
        <begin position="51"/>
        <end position="53"/>
    </location>
    <ligand>
        <name>NADP(+)</name>
        <dbReference type="ChEBI" id="CHEBI:58349"/>
    </ligand>
</feature>
<feature type="binding site" evidence="1">
    <location>
        <position position="67"/>
    </location>
    <ligand>
        <name>substrate</name>
    </ligand>
</feature>
<feature type="binding site" evidence="1">
    <location>
        <begin position="73"/>
        <end position="75"/>
    </location>
    <ligand>
        <name>NADP(+)</name>
        <dbReference type="ChEBI" id="CHEBI:58349"/>
    </ligand>
</feature>
<feature type="binding site" evidence="1">
    <location>
        <begin position="112"/>
        <end position="119"/>
    </location>
    <ligand>
        <name>NADP(+)</name>
        <dbReference type="ChEBI" id="CHEBI:58349"/>
    </ligand>
</feature>
<feature type="strand" evidence="8">
    <location>
        <begin position="3"/>
        <end position="9"/>
    </location>
</feature>
<feature type="turn" evidence="8">
    <location>
        <begin position="22"/>
        <end position="24"/>
    </location>
</feature>
<feature type="helix" evidence="8">
    <location>
        <begin position="26"/>
        <end position="37"/>
    </location>
</feature>
<feature type="strand" evidence="8">
    <location>
        <begin position="44"/>
        <end position="50"/>
    </location>
</feature>
<feature type="helix" evidence="8">
    <location>
        <begin position="51"/>
        <end position="56"/>
    </location>
</feature>
<feature type="helix" evidence="8">
    <location>
        <begin position="59"/>
        <end position="61"/>
    </location>
</feature>
<feature type="strand" evidence="8">
    <location>
        <begin position="67"/>
        <end position="72"/>
    </location>
</feature>
<feature type="strand" evidence="8">
    <location>
        <begin position="84"/>
        <end position="88"/>
    </location>
</feature>
<feature type="helix" evidence="8">
    <location>
        <begin position="89"/>
        <end position="96"/>
    </location>
</feature>
<feature type="turn" evidence="8">
    <location>
        <begin position="99"/>
        <end position="104"/>
    </location>
</feature>
<feature type="strand" evidence="8">
    <location>
        <begin position="105"/>
        <end position="110"/>
    </location>
</feature>
<feature type="helix" evidence="8">
    <location>
        <begin position="114"/>
        <end position="122"/>
    </location>
</feature>
<feature type="strand" evidence="8">
    <location>
        <begin position="124"/>
        <end position="126"/>
    </location>
</feature>
<feature type="strand" evidence="8">
    <location>
        <begin position="128"/>
        <end position="136"/>
    </location>
</feature>
<feature type="helix" evidence="8">
    <location>
        <begin position="150"/>
        <end position="152"/>
    </location>
</feature>
<feature type="strand" evidence="8">
    <location>
        <begin position="166"/>
        <end position="168"/>
    </location>
</feature>
<feature type="strand" evidence="8">
    <location>
        <begin position="171"/>
        <end position="180"/>
    </location>
</feature>
<comment type="function">
    <text evidence="3">Key enzyme in folate metabolism. Contributes to the de novo mitochondrial thymidylate biosynthesis pathway. Catalyzes an essential reaction for de novo glycine and purine synthesis, and for DNA precursor synthesis.</text>
</comment>
<comment type="catalytic activity">
    <reaction evidence="3">
        <text>(6S)-5,6,7,8-tetrahydrofolate + NADP(+) = 7,8-dihydrofolate + NADPH + H(+)</text>
        <dbReference type="Rhea" id="RHEA:15009"/>
        <dbReference type="ChEBI" id="CHEBI:15378"/>
        <dbReference type="ChEBI" id="CHEBI:57451"/>
        <dbReference type="ChEBI" id="CHEBI:57453"/>
        <dbReference type="ChEBI" id="CHEBI:57783"/>
        <dbReference type="ChEBI" id="CHEBI:58349"/>
        <dbReference type="EC" id="1.5.1.3"/>
    </reaction>
</comment>
<comment type="biophysicochemical properties">
    <kinetics>
        <KM evidence="3">26.4 uM for dihydrofolate</KM>
        <KM evidence="3">123 uM for NADPH</KM>
        <text evidence="3">kcat is 35.9 sec(-1) for dihydrofolate. kcat is 130 sec(-1) for NADPH.</text>
    </kinetics>
</comment>
<comment type="pathway">
    <text evidence="3">Cofactor biosynthesis; tetrahydrofolate biosynthesis; 5,6,7,8-tetrahydrofolate from 7,8-dihydrofolate: step 1/1.</text>
</comment>
<comment type="subunit">
    <text evidence="3">Monomer.</text>
</comment>
<comment type="similarity">
    <text evidence="5">Belongs to the dihydrofolate reductase family.</text>
</comment>
<accession>G4VJD6</accession>
<organism>
    <name type="scientific">Schistosoma mansoni</name>
    <name type="common">Blood fluke</name>
    <dbReference type="NCBI Taxonomy" id="6183"/>
    <lineage>
        <taxon>Eukaryota</taxon>
        <taxon>Metazoa</taxon>
        <taxon>Spiralia</taxon>
        <taxon>Lophotrochozoa</taxon>
        <taxon>Platyhelminthes</taxon>
        <taxon>Trematoda</taxon>
        <taxon>Digenea</taxon>
        <taxon>Strigeidida</taxon>
        <taxon>Schistosomatoidea</taxon>
        <taxon>Schistosomatidae</taxon>
        <taxon>Schistosoma</taxon>
    </lineage>
</organism>
<gene>
    <name evidence="4" type="primary">DHFR</name>
    <name evidence="6" type="ORF">Smp_175230</name>
</gene>
<keyword id="KW-0002">3D-structure</keyword>
<keyword id="KW-0521">NADP</keyword>
<keyword id="KW-0554">One-carbon metabolism</keyword>
<keyword id="KW-0560">Oxidoreductase</keyword>
<keyword id="KW-1185">Reference proteome</keyword>
<name>DYR_SCHMA</name>
<dbReference type="EC" id="1.5.1.3" evidence="3"/>
<dbReference type="EMBL" id="HE601627">
    <property type="protein sequence ID" value="CCD79537.1"/>
    <property type="molecule type" value="Genomic_DNA"/>
</dbReference>
<dbReference type="RefSeq" id="XP_018652141.1">
    <property type="nucleotide sequence ID" value="XM_018797062.1"/>
</dbReference>
<dbReference type="PDB" id="3VCO">
    <property type="method" value="X-ray"/>
    <property type="resolution" value="1.95 A"/>
    <property type="chains" value="A=1-181"/>
</dbReference>
<dbReference type="PDBsum" id="3VCO"/>
<dbReference type="SMR" id="G4VJD6"/>
<dbReference type="FunCoup" id="G4VJD6">
    <property type="interactions" value="398"/>
</dbReference>
<dbReference type="GeneID" id="8344547"/>
<dbReference type="KEGG" id="smm:Smp_175230"/>
<dbReference type="CTD" id="8344547"/>
<dbReference type="eggNOG" id="KOG1324">
    <property type="taxonomic scope" value="Eukaryota"/>
</dbReference>
<dbReference type="HOGENOM" id="CLU_043966_2_3_1"/>
<dbReference type="InParanoid" id="G4VJD6"/>
<dbReference type="OMA" id="RDNQLPW"/>
<dbReference type="OrthoDB" id="4664297at2759"/>
<dbReference type="PhylomeDB" id="G4VJD6"/>
<dbReference type="BRENDA" id="1.5.1.3">
    <property type="organism ID" value="5608"/>
</dbReference>
<dbReference type="UniPathway" id="UPA00077">
    <property type="reaction ID" value="UER00158"/>
</dbReference>
<dbReference type="EvolutionaryTrace" id="G4VJD6"/>
<dbReference type="Proteomes" id="UP000008854">
    <property type="component" value="Chromosome 4"/>
</dbReference>
<dbReference type="GO" id="GO:0005739">
    <property type="term" value="C:mitochondrion"/>
    <property type="evidence" value="ECO:0007669"/>
    <property type="project" value="TreeGrafter"/>
</dbReference>
<dbReference type="GO" id="GO:0004146">
    <property type="term" value="F:dihydrofolate reductase activity"/>
    <property type="evidence" value="ECO:0000314"/>
    <property type="project" value="UniProtKB"/>
</dbReference>
<dbReference type="GO" id="GO:0050661">
    <property type="term" value="F:NADP binding"/>
    <property type="evidence" value="ECO:0007669"/>
    <property type="project" value="InterPro"/>
</dbReference>
<dbReference type="GO" id="GO:0046452">
    <property type="term" value="P:dihydrofolate metabolic process"/>
    <property type="evidence" value="ECO:0007669"/>
    <property type="project" value="TreeGrafter"/>
</dbReference>
<dbReference type="GO" id="GO:0046655">
    <property type="term" value="P:folic acid metabolic process"/>
    <property type="evidence" value="ECO:0007669"/>
    <property type="project" value="TreeGrafter"/>
</dbReference>
<dbReference type="GO" id="GO:0006730">
    <property type="term" value="P:one-carbon metabolic process"/>
    <property type="evidence" value="ECO:0007669"/>
    <property type="project" value="UniProtKB-KW"/>
</dbReference>
<dbReference type="GO" id="GO:0046654">
    <property type="term" value="P:tetrahydrofolate biosynthetic process"/>
    <property type="evidence" value="ECO:0000314"/>
    <property type="project" value="UniProtKB"/>
</dbReference>
<dbReference type="CDD" id="cd00209">
    <property type="entry name" value="DHFR"/>
    <property type="match status" value="1"/>
</dbReference>
<dbReference type="Gene3D" id="3.40.430.10">
    <property type="entry name" value="Dihydrofolate Reductase, subunit A"/>
    <property type="match status" value="1"/>
</dbReference>
<dbReference type="InterPro" id="IPR012259">
    <property type="entry name" value="DHFR"/>
</dbReference>
<dbReference type="InterPro" id="IPR024072">
    <property type="entry name" value="DHFR-like_dom_sf"/>
</dbReference>
<dbReference type="InterPro" id="IPR017925">
    <property type="entry name" value="DHFR_CS"/>
</dbReference>
<dbReference type="InterPro" id="IPR001796">
    <property type="entry name" value="DHFR_dom"/>
</dbReference>
<dbReference type="PANTHER" id="PTHR48069">
    <property type="entry name" value="DIHYDROFOLATE REDUCTASE"/>
    <property type="match status" value="1"/>
</dbReference>
<dbReference type="PANTHER" id="PTHR48069:SF3">
    <property type="entry name" value="DIHYDROFOLATE REDUCTASE"/>
    <property type="match status" value="1"/>
</dbReference>
<dbReference type="Pfam" id="PF00186">
    <property type="entry name" value="DHFR_1"/>
    <property type="match status" value="1"/>
</dbReference>
<dbReference type="PRINTS" id="PR00070">
    <property type="entry name" value="DHFR"/>
</dbReference>
<dbReference type="SUPFAM" id="SSF53597">
    <property type="entry name" value="Dihydrofolate reductase-like"/>
    <property type="match status" value="1"/>
</dbReference>
<dbReference type="PROSITE" id="PS00075">
    <property type="entry name" value="DHFR_1"/>
    <property type="match status" value="1"/>
</dbReference>
<dbReference type="PROSITE" id="PS51330">
    <property type="entry name" value="DHFR_2"/>
    <property type="match status" value="1"/>
</dbReference>
<proteinExistence type="evidence at protein level"/>